<reference key="1">
    <citation type="journal article" date="2003" name="Proc. Natl. Acad. Sci. U.S.A.">
        <title>The complete genome sequence of the Arabidopsis and tomato pathogen Pseudomonas syringae pv. tomato DC3000.</title>
        <authorList>
            <person name="Buell C.R."/>
            <person name="Joardar V."/>
            <person name="Lindeberg M."/>
            <person name="Selengut J."/>
            <person name="Paulsen I.T."/>
            <person name="Gwinn M.L."/>
            <person name="Dodson R.J."/>
            <person name="DeBoy R.T."/>
            <person name="Durkin A.S."/>
            <person name="Kolonay J.F."/>
            <person name="Madupu R."/>
            <person name="Daugherty S.C."/>
            <person name="Brinkac L.M."/>
            <person name="Beanan M.J."/>
            <person name="Haft D.H."/>
            <person name="Nelson W.C."/>
            <person name="Davidsen T.M."/>
            <person name="Zafar N."/>
            <person name="Zhou L."/>
            <person name="Liu J."/>
            <person name="Yuan Q."/>
            <person name="Khouri H.M."/>
            <person name="Fedorova N.B."/>
            <person name="Tran B."/>
            <person name="Russell D."/>
            <person name="Berry K.J."/>
            <person name="Utterback T.R."/>
            <person name="Van Aken S.E."/>
            <person name="Feldblyum T.V."/>
            <person name="D'Ascenzo M."/>
            <person name="Deng W.-L."/>
            <person name="Ramos A.R."/>
            <person name="Alfano J.R."/>
            <person name="Cartinhour S."/>
            <person name="Chatterjee A.K."/>
            <person name="Delaney T.P."/>
            <person name="Lazarowitz S.G."/>
            <person name="Martin G.B."/>
            <person name="Schneider D.J."/>
            <person name="Tang X."/>
            <person name="Bender C.L."/>
            <person name="White O."/>
            <person name="Fraser C.M."/>
            <person name="Collmer A."/>
        </authorList>
    </citation>
    <scope>NUCLEOTIDE SEQUENCE [LARGE SCALE GENOMIC DNA]</scope>
    <source>
        <strain>ATCC BAA-871 / DC3000</strain>
    </source>
</reference>
<gene>
    <name type="primary">rpmF</name>
    <name type="ordered locus">PSPTO_3835</name>
</gene>
<accession>Q87YG4</accession>
<evidence type="ECO:0000250" key="1"/>
<evidence type="ECO:0000256" key="2">
    <source>
        <dbReference type="SAM" id="MobiDB-lite"/>
    </source>
</evidence>
<evidence type="ECO:0000305" key="3"/>
<proteinExistence type="inferred from homology"/>
<protein>
    <recommendedName>
        <fullName evidence="3">Large ribosomal subunit protein bL32</fullName>
    </recommendedName>
    <alternativeName>
        <fullName>50S ribosomal protein L32</fullName>
    </alternativeName>
</protein>
<dbReference type="EMBL" id="AE016853">
    <property type="protein sequence ID" value="AAO57303.1"/>
    <property type="molecule type" value="Genomic_DNA"/>
</dbReference>
<dbReference type="RefSeq" id="NP_793608.1">
    <property type="nucleotide sequence ID" value="NC_004578.1"/>
</dbReference>
<dbReference type="RefSeq" id="WP_002552688.1">
    <property type="nucleotide sequence ID" value="NC_004578.1"/>
</dbReference>
<dbReference type="SMR" id="Q87YG4"/>
<dbReference type="STRING" id="223283.PSPTO_3835"/>
<dbReference type="GeneID" id="96217995"/>
<dbReference type="KEGG" id="pst:PSPTO_3835"/>
<dbReference type="PATRIC" id="fig|223283.9.peg.3932"/>
<dbReference type="eggNOG" id="COG0333">
    <property type="taxonomic scope" value="Bacteria"/>
</dbReference>
<dbReference type="HOGENOM" id="CLU_129084_2_1_6"/>
<dbReference type="OrthoDB" id="9801927at2"/>
<dbReference type="PhylomeDB" id="Q87YG4"/>
<dbReference type="Proteomes" id="UP000002515">
    <property type="component" value="Chromosome"/>
</dbReference>
<dbReference type="GO" id="GO:0015934">
    <property type="term" value="C:large ribosomal subunit"/>
    <property type="evidence" value="ECO:0007669"/>
    <property type="project" value="InterPro"/>
</dbReference>
<dbReference type="GO" id="GO:0003735">
    <property type="term" value="F:structural constituent of ribosome"/>
    <property type="evidence" value="ECO:0007669"/>
    <property type="project" value="InterPro"/>
</dbReference>
<dbReference type="GO" id="GO:0006412">
    <property type="term" value="P:translation"/>
    <property type="evidence" value="ECO:0007669"/>
    <property type="project" value="UniProtKB-UniRule"/>
</dbReference>
<dbReference type="HAMAP" id="MF_00340">
    <property type="entry name" value="Ribosomal_bL32"/>
    <property type="match status" value="1"/>
</dbReference>
<dbReference type="InterPro" id="IPR002677">
    <property type="entry name" value="Ribosomal_bL32"/>
</dbReference>
<dbReference type="InterPro" id="IPR044957">
    <property type="entry name" value="Ribosomal_bL32_bact"/>
</dbReference>
<dbReference type="InterPro" id="IPR011332">
    <property type="entry name" value="Ribosomal_zn-bd"/>
</dbReference>
<dbReference type="NCBIfam" id="TIGR01031">
    <property type="entry name" value="rpmF_bact"/>
    <property type="match status" value="1"/>
</dbReference>
<dbReference type="PANTHER" id="PTHR35534">
    <property type="entry name" value="50S RIBOSOMAL PROTEIN L32"/>
    <property type="match status" value="1"/>
</dbReference>
<dbReference type="PANTHER" id="PTHR35534:SF1">
    <property type="entry name" value="LARGE RIBOSOMAL SUBUNIT PROTEIN BL32"/>
    <property type="match status" value="1"/>
</dbReference>
<dbReference type="Pfam" id="PF01783">
    <property type="entry name" value="Ribosomal_L32p"/>
    <property type="match status" value="1"/>
</dbReference>
<dbReference type="SUPFAM" id="SSF57829">
    <property type="entry name" value="Zn-binding ribosomal proteins"/>
    <property type="match status" value="1"/>
</dbReference>
<comment type="similarity">
    <text evidence="3">Belongs to the bacterial ribosomal protein bL32 family.</text>
</comment>
<feature type="initiator methionine" description="Removed" evidence="1">
    <location>
        <position position="1"/>
    </location>
</feature>
<feature type="chain" id="PRO_0000172390" description="Large ribosomal subunit protein bL32">
    <location>
        <begin position="2"/>
        <end position="60"/>
    </location>
</feature>
<feature type="region of interest" description="Disordered" evidence="2">
    <location>
        <begin position="1"/>
        <end position="28"/>
    </location>
</feature>
<feature type="compositionally biased region" description="Basic and acidic residues" evidence="2">
    <location>
        <begin position="11"/>
        <end position="22"/>
    </location>
</feature>
<sequence>MAVQQNKKSRSARDMRRSHDALEASTLSVEKTTGEIHLRHHVSPEGVYRGRKVIDKGADE</sequence>
<organism>
    <name type="scientific">Pseudomonas syringae pv. tomato (strain ATCC BAA-871 / DC3000)</name>
    <dbReference type="NCBI Taxonomy" id="223283"/>
    <lineage>
        <taxon>Bacteria</taxon>
        <taxon>Pseudomonadati</taxon>
        <taxon>Pseudomonadota</taxon>
        <taxon>Gammaproteobacteria</taxon>
        <taxon>Pseudomonadales</taxon>
        <taxon>Pseudomonadaceae</taxon>
        <taxon>Pseudomonas</taxon>
    </lineage>
</organism>
<name>RL32_PSESM</name>
<keyword id="KW-1185">Reference proteome</keyword>
<keyword id="KW-0687">Ribonucleoprotein</keyword>
<keyword id="KW-0689">Ribosomal protein</keyword>